<protein>
    <recommendedName>
        <fullName evidence="1">Trehalose-6-phosphate synthase</fullName>
        <shortName evidence="1">TPS</shortName>
        <ecNumber evidence="1">2.4.1.15</ecNumber>
    </recommendedName>
    <alternativeName>
        <fullName evidence="1">Alpha,alpha-trehalose-phosphate synthase [UDP-forming]</fullName>
    </alternativeName>
    <alternativeName>
        <fullName evidence="1">Osmoregulatory trehalose synthesis protein A</fullName>
        <shortName evidence="1">OtsA</shortName>
    </alternativeName>
    <alternativeName>
        <fullName evidence="1">UDP-glucose-glucosephosphate glucosyltransferase</fullName>
    </alternativeName>
</protein>
<feature type="chain" id="PRO_0000348917" description="Trehalose-6-phosphate synthase">
    <location>
        <begin position="1"/>
        <end position="473"/>
    </location>
</feature>
<feature type="region of interest" description="Disordered" evidence="2">
    <location>
        <begin position="454"/>
        <end position="473"/>
    </location>
</feature>
<feature type="binding site" evidence="1">
    <location>
        <position position="10"/>
    </location>
    <ligand>
        <name>D-glucose 6-phosphate</name>
        <dbReference type="ChEBI" id="CHEBI:61548"/>
    </ligand>
</feature>
<feature type="binding site" evidence="1">
    <location>
        <begin position="21"/>
        <end position="22"/>
    </location>
    <ligand>
        <name>UDP-alpha-D-glucose</name>
        <dbReference type="ChEBI" id="CHEBI:58885"/>
    </ligand>
</feature>
<feature type="binding site" evidence="1">
    <location>
        <position position="76"/>
    </location>
    <ligand>
        <name>D-glucose 6-phosphate</name>
        <dbReference type="ChEBI" id="CHEBI:61548"/>
    </ligand>
</feature>
<feature type="binding site" evidence="1">
    <location>
        <position position="130"/>
    </location>
    <ligand>
        <name>D-glucose 6-phosphate</name>
        <dbReference type="ChEBI" id="CHEBI:61548"/>
    </ligand>
</feature>
<feature type="binding site" evidence="1">
    <location>
        <position position="262"/>
    </location>
    <ligand>
        <name>UDP-alpha-D-glucose</name>
        <dbReference type="ChEBI" id="CHEBI:58885"/>
    </ligand>
</feature>
<feature type="binding site" evidence="1">
    <location>
        <position position="267"/>
    </location>
    <ligand>
        <name>UDP-alpha-D-glucose</name>
        <dbReference type="ChEBI" id="CHEBI:58885"/>
    </ligand>
</feature>
<feature type="binding site" evidence="1">
    <location>
        <position position="300"/>
    </location>
    <ligand>
        <name>D-glucose 6-phosphate</name>
        <dbReference type="ChEBI" id="CHEBI:61548"/>
    </ligand>
</feature>
<feature type="binding site" evidence="1">
    <location>
        <position position="339"/>
    </location>
    <ligand>
        <name>UDP-alpha-D-glucose</name>
        <dbReference type="ChEBI" id="CHEBI:58885"/>
    </ligand>
</feature>
<feature type="binding site" evidence="1">
    <location>
        <begin position="365"/>
        <end position="369"/>
    </location>
    <ligand>
        <name>UDP-alpha-D-glucose</name>
        <dbReference type="ChEBI" id="CHEBI:58885"/>
    </ligand>
</feature>
<feature type="site" description="Involved in alpha anomer selectivity" evidence="1">
    <location>
        <position position="85"/>
    </location>
</feature>
<feature type="site" description="Involved in alpha anomer selectivity" evidence="1">
    <location>
        <position position="155"/>
    </location>
</feature>
<dbReference type="EC" id="2.4.1.15" evidence="1"/>
<dbReference type="EMBL" id="CP000026">
    <property type="protein sequence ID" value="AAV76916.1"/>
    <property type="molecule type" value="Genomic_DNA"/>
</dbReference>
<dbReference type="RefSeq" id="WP_000089042.1">
    <property type="nucleotide sequence ID" value="NC_006511.1"/>
</dbReference>
<dbReference type="SMR" id="Q5PMW8"/>
<dbReference type="CAZy" id="GT20">
    <property type="family name" value="Glycosyltransferase Family 20"/>
</dbReference>
<dbReference type="KEGG" id="spt:SPA0940"/>
<dbReference type="HOGENOM" id="CLU_002351_7_1_6"/>
<dbReference type="UniPathway" id="UPA00299"/>
<dbReference type="Proteomes" id="UP000008185">
    <property type="component" value="Chromosome"/>
</dbReference>
<dbReference type="GO" id="GO:0003825">
    <property type="term" value="F:alpha,alpha-trehalose-phosphate synthase (UDP-forming) activity"/>
    <property type="evidence" value="ECO:0007669"/>
    <property type="project" value="UniProtKB-EC"/>
</dbReference>
<dbReference type="GO" id="GO:0005992">
    <property type="term" value="P:trehalose biosynthetic process"/>
    <property type="evidence" value="ECO:0007669"/>
    <property type="project" value="UniProtKB-UniPathway"/>
</dbReference>
<dbReference type="CDD" id="cd03788">
    <property type="entry name" value="GT20_TPS"/>
    <property type="match status" value="1"/>
</dbReference>
<dbReference type="FunFam" id="3.40.50.2000:FF:000024">
    <property type="entry name" value="Trehalose-6-phosphate synthase"/>
    <property type="match status" value="1"/>
</dbReference>
<dbReference type="Gene3D" id="3.40.50.2000">
    <property type="entry name" value="Glycogen Phosphorylase B"/>
    <property type="match status" value="2"/>
</dbReference>
<dbReference type="InterPro" id="IPR001830">
    <property type="entry name" value="Glyco_trans_20"/>
</dbReference>
<dbReference type="InterPro" id="IPR012766">
    <property type="entry name" value="Trehalose_OtsA"/>
</dbReference>
<dbReference type="NCBIfam" id="NF007513">
    <property type="entry name" value="PRK10117.1"/>
    <property type="match status" value="1"/>
</dbReference>
<dbReference type="NCBIfam" id="TIGR02400">
    <property type="entry name" value="trehalose_OtsA"/>
    <property type="match status" value="1"/>
</dbReference>
<dbReference type="PANTHER" id="PTHR10788:SF106">
    <property type="entry name" value="BCDNA.GH08860"/>
    <property type="match status" value="1"/>
</dbReference>
<dbReference type="PANTHER" id="PTHR10788">
    <property type="entry name" value="TREHALOSE-6-PHOSPHATE SYNTHASE"/>
    <property type="match status" value="1"/>
</dbReference>
<dbReference type="Pfam" id="PF00982">
    <property type="entry name" value="Glyco_transf_20"/>
    <property type="match status" value="1"/>
</dbReference>
<dbReference type="SUPFAM" id="SSF53756">
    <property type="entry name" value="UDP-Glycosyltransferase/glycogen phosphorylase"/>
    <property type="match status" value="1"/>
</dbReference>
<reference key="1">
    <citation type="journal article" date="2004" name="Nat. Genet.">
        <title>Comparison of genome degradation in Paratyphi A and Typhi, human-restricted serovars of Salmonella enterica that cause typhoid.</title>
        <authorList>
            <person name="McClelland M."/>
            <person name="Sanderson K.E."/>
            <person name="Clifton S.W."/>
            <person name="Latreille P."/>
            <person name="Porwollik S."/>
            <person name="Sabo A."/>
            <person name="Meyer R."/>
            <person name="Bieri T."/>
            <person name="Ozersky P."/>
            <person name="McLellan M."/>
            <person name="Harkins C.R."/>
            <person name="Wang C."/>
            <person name="Nguyen C."/>
            <person name="Berghoff A."/>
            <person name="Elliott G."/>
            <person name="Kohlberg S."/>
            <person name="Strong C."/>
            <person name="Du F."/>
            <person name="Carter J."/>
            <person name="Kremizki C."/>
            <person name="Layman D."/>
            <person name="Leonard S."/>
            <person name="Sun H."/>
            <person name="Fulton L."/>
            <person name="Nash W."/>
            <person name="Miner T."/>
            <person name="Minx P."/>
            <person name="Delehaunty K."/>
            <person name="Fronick C."/>
            <person name="Magrini V."/>
            <person name="Nhan M."/>
            <person name="Warren W."/>
            <person name="Florea L."/>
            <person name="Spieth J."/>
            <person name="Wilson R.K."/>
        </authorList>
    </citation>
    <scope>NUCLEOTIDE SEQUENCE [LARGE SCALE GENOMIC DNA]</scope>
    <source>
        <strain>ATCC 9150 / SARB42</strain>
    </source>
</reference>
<name>OTSA_SALPA</name>
<keyword id="KW-0328">Glycosyltransferase</keyword>
<keyword id="KW-0808">Transferase</keyword>
<evidence type="ECO:0000250" key="1">
    <source>
        <dbReference type="UniProtKB" id="P31677"/>
    </source>
</evidence>
<evidence type="ECO:0000256" key="2">
    <source>
        <dbReference type="SAM" id="MobiDB-lite"/>
    </source>
</evidence>
<comment type="function">
    <text evidence="1">Probably involved in the osmoprotection via the biosynthesis of trehalose. Catalyzes the transfer of glucose from UDP-alpha-D-glucose (UDP-Glc) to D-glucose 6-phosphate (Glc-6-P) to form trehalose-6-phosphate. Acts with retention of the anomeric configuration of the UDP-sugar donor.</text>
</comment>
<comment type="catalytic activity">
    <reaction evidence="1">
        <text>D-glucose 6-phosphate + UDP-alpha-D-glucose = alpha,alpha-trehalose 6-phosphate + UDP + H(+)</text>
        <dbReference type="Rhea" id="RHEA:18889"/>
        <dbReference type="ChEBI" id="CHEBI:15378"/>
        <dbReference type="ChEBI" id="CHEBI:58223"/>
        <dbReference type="ChEBI" id="CHEBI:58429"/>
        <dbReference type="ChEBI" id="CHEBI:58885"/>
        <dbReference type="ChEBI" id="CHEBI:61548"/>
        <dbReference type="EC" id="2.4.1.15"/>
    </reaction>
</comment>
<comment type="pathway">
    <text evidence="1">Glycan biosynthesis; trehalose biosynthesis.</text>
</comment>
<comment type="subunit">
    <text evidence="1">Homotetramer.</text>
</comment>
<comment type="similarity">
    <text evidence="1">Belongs to the glycosyltransferase 20 family.</text>
</comment>
<organism>
    <name type="scientific">Salmonella paratyphi A (strain ATCC 9150 / SARB42)</name>
    <dbReference type="NCBI Taxonomy" id="295319"/>
    <lineage>
        <taxon>Bacteria</taxon>
        <taxon>Pseudomonadati</taxon>
        <taxon>Pseudomonadota</taxon>
        <taxon>Gammaproteobacteria</taxon>
        <taxon>Enterobacterales</taxon>
        <taxon>Enterobacteriaceae</taxon>
        <taxon>Salmonella</taxon>
    </lineage>
</organism>
<gene>
    <name evidence="1" type="primary">otsA</name>
    <name type="ordered locus">SPA0940</name>
</gene>
<proteinExistence type="inferred from homology"/>
<sequence length="473" mass="53581">MSRLVVVSNRIAPPDNKGGAGGLAVGVLGALKAAGGLWFGWSGETGNEDEPLKKVTKGNITWASFNLSEQDYEDYYCQFSNAVLWPAFHYRLDLVQFQRPAWEGYMRVNALLADKLLPLIKENDIIWVHDYHLLPFASELRKRGVNNRIGFFLHIPFPTPEIFNALPPHDELLEQLCDFDLLGFQTENDRLAFLDSLSSQTRVTTRSGKQHIAWGKDFQTEVYPIGIEPDEIALQAAGPLPPKLAQLKAELKNVKNIFSVERLDYSKGLPERFLAYEALLENYPQHRGKIRYTQIAPTSRGEVQAYQDIRHQLETEAGRINGKYGQLGWTPLYYLNQHFDRKLLMKIFRYSDVGLVTPLRDGMNLVAKEFVAAQDPANPGVLVLSQFAGAANELTSALIVNPYDRDDVAAALNRALTMPLAERISRHAEMLDVIVKNDINRWQERFIHDLKEVTPRSPERQQQNNVATFPKLA</sequence>
<accession>Q5PMW8</accession>